<keyword id="KW-0150">Chloroplast</keyword>
<keyword id="KW-0456">Lyase</keyword>
<keyword id="KW-0460">Magnesium</keyword>
<keyword id="KW-0479">Metal-binding</keyword>
<keyword id="KW-0934">Plastid</keyword>
<keyword id="KW-0809">Transit peptide</keyword>
<organism>
    <name type="scientific">Pinus banksiana</name>
    <name type="common">Jack pine</name>
    <name type="synonym">Pinus divaricata</name>
    <dbReference type="NCBI Taxonomy" id="3353"/>
    <lineage>
        <taxon>Eukaryota</taxon>
        <taxon>Viridiplantae</taxon>
        <taxon>Streptophyta</taxon>
        <taxon>Embryophyta</taxon>
        <taxon>Tracheophyta</taxon>
        <taxon>Spermatophyta</taxon>
        <taxon>Pinopsida</taxon>
        <taxon>Pinidae</taxon>
        <taxon>Conifers I</taxon>
        <taxon>Pinales</taxon>
        <taxon>Pinaceae</taxon>
        <taxon>Pinus</taxon>
        <taxon>Pinus subgen. Pinus</taxon>
    </lineage>
</organism>
<gene>
    <name evidence="6" type="primary">TPS-mono2</name>
</gene>
<proteinExistence type="evidence at protein level"/>
<sequence>MALVSAVPLDSRLCLCRTLFGLTHELKAIRRTIPNLGMCRGGKSIAPSMSMSSTTFVSSEDGVPRRIGGHHSNLWDDDSIDSLSTSYEAPSYRERADRLIGEVKDMFHLISVEDGVSTSPLNDLHHRLWMVDSVERLGIDRHFKNETNAGLDHVYSYWTEKGIGRGRESGATDLNSTALGLRTLRLHGYMVSSHVLDHFKNEKGQFTCSAIQTEGEIRDVLNLFRASLIAFPGEKIMDAAEIFSTMYLKDALQKIPPSGLSQEIEYLLEFGWHTNLPRMETRMYIDVFGEDTTFETPYLIRERLLELAKLEFNIFHSLVKRELQSLSRWWKDYGFPEITFSRHRHVEYYTLAACIANDPKHSAFRLGFAKICHMVTILDDIYDTFGTMEELELLTAAFKRWDPSSIECLPDYMKGVYMAVYDNINETAREAQKIQGWDIVSYARKSWEALFDAHMQEAKWISSGYLPTFEEYLENGKVSFGSRLTTLEPMLTLGFPLPPRILQEIDFPSNFNELICAILRLRGDTQCYKADRARGEEASSVSCYMKDHPGITEEDAVNQINALVNNLTKELNSELLRPDSGVPISYKKFYFDIWRVFHYGYKYRDGFSVASIEIKNLVTITVVETVPL</sequence>
<name>MTPS2_PINBN</name>
<dbReference type="EC" id="4.2.3.-" evidence="3"/>
<dbReference type="EMBL" id="JQ240297">
    <property type="protein sequence ID" value="AFU73849.1"/>
    <property type="molecule type" value="mRNA"/>
</dbReference>
<dbReference type="SMR" id="R9QMW6"/>
<dbReference type="UniPathway" id="UPA00213"/>
<dbReference type="UniPathway" id="UPA00924"/>
<dbReference type="GO" id="GO:0009507">
    <property type="term" value="C:chloroplast"/>
    <property type="evidence" value="ECO:0007669"/>
    <property type="project" value="UniProtKB-SubCell"/>
</dbReference>
<dbReference type="GO" id="GO:0000287">
    <property type="term" value="F:magnesium ion binding"/>
    <property type="evidence" value="ECO:0007669"/>
    <property type="project" value="InterPro"/>
</dbReference>
<dbReference type="GO" id="GO:0010333">
    <property type="term" value="F:terpene synthase activity"/>
    <property type="evidence" value="ECO:0000314"/>
    <property type="project" value="UniProtKB"/>
</dbReference>
<dbReference type="GO" id="GO:0016102">
    <property type="term" value="P:diterpenoid biosynthetic process"/>
    <property type="evidence" value="ECO:0007669"/>
    <property type="project" value="InterPro"/>
</dbReference>
<dbReference type="GO" id="GO:0010597">
    <property type="term" value="P:green leaf volatile biosynthetic process"/>
    <property type="evidence" value="ECO:0000314"/>
    <property type="project" value="UniProtKB"/>
</dbReference>
<dbReference type="GO" id="GO:0016114">
    <property type="term" value="P:terpenoid biosynthetic process"/>
    <property type="evidence" value="ECO:0000314"/>
    <property type="project" value="UniProtKB"/>
</dbReference>
<dbReference type="CDD" id="cd00684">
    <property type="entry name" value="Terpene_cyclase_plant_C1"/>
    <property type="match status" value="1"/>
</dbReference>
<dbReference type="FunFam" id="1.50.10.130:FF:000002">
    <property type="entry name" value="Ent-copalyl diphosphate synthase, chloroplastic"/>
    <property type="match status" value="1"/>
</dbReference>
<dbReference type="FunFam" id="1.10.600.10:FF:000005">
    <property type="entry name" value="Ent-kaur-16-ene synthase, chloroplastic"/>
    <property type="match status" value="1"/>
</dbReference>
<dbReference type="Gene3D" id="1.10.600.10">
    <property type="entry name" value="Farnesyl Diphosphate Synthase"/>
    <property type="match status" value="1"/>
</dbReference>
<dbReference type="Gene3D" id="1.50.10.130">
    <property type="entry name" value="Terpene synthase, N-terminal domain"/>
    <property type="match status" value="1"/>
</dbReference>
<dbReference type="InterPro" id="IPR008949">
    <property type="entry name" value="Isoprenoid_synthase_dom_sf"/>
</dbReference>
<dbReference type="InterPro" id="IPR034741">
    <property type="entry name" value="Terpene_cyclase-like_1_C"/>
</dbReference>
<dbReference type="InterPro" id="IPR044814">
    <property type="entry name" value="Terpene_cyclase_plant_C1"/>
</dbReference>
<dbReference type="InterPro" id="IPR001906">
    <property type="entry name" value="Terpene_synth_N"/>
</dbReference>
<dbReference type="InterPro" id="IPR036965">
    <property type="entry name" value="Terpene_synth_N_sf"/>
</dbReference>
<dbReference type="InterPro" id="IPR050148">
    <property type="entry name" value="Terpene_synthase-like"/>
</dbReference>
<dbReference type="InterPro" id="IPR005630">
    <property type="entry name" value="Terpene_synthase_metal-bd"/>
</dbReference>
<dbReference type="InterPro" id="IPR008930">
    <property type="entry name" value="Terpenoid_cyclase/PrenylTrfase"/>
</dbReference>
<dbReference type="PANTHER" id="PTHR31739:SF25">
    <property type="entry name" value="(E,E)-GERANYLLINALOOL SYNTHASE"/>
    <property type="match status" value="1"/>
</dbReference>
<dbReference type="PANTHER" id="PTHR31739">
    <property type="entry name" value="ENT-COPALYL DIPHOSPHATE SYNTHASE, CHLOROPLASTIC"/>
    <property type="match status" value="1"/>
</dbReference>
<dbReference type="Pfam" id="PF01397">
    <property type="entry name" value="Terpene_synth"/>
    <property type="match status" value="1"/>
</dbReference>
<dbReference type="Pfam" id="PF03936">
    <property type="entry name" value="Terpene_synth_C"/>
    <property type="match status" value="1"/>
</dbReference>
<dbReference type="SFLD" id="SFLDS00005">
    <property type="entry name" value="Isoprenoid_Synthase_Type_I"/>
    <property type="match status" value="1"/>
</dbReference>
<dbReference type="SFLD" id="SFLDG01019">
    <property type="entry name" value="Terpene_Cyclase_Like_1_C_Termi"/>
    <property type="match status" value="1"/>
</dbReference>
<dbReference type="SFLD" id="SFLDG01014">
    <property type="entry name" value="Terpene_Cyclase_Like_1_N-term"/>
    <property type="match status" value="1"/>
</dbReference>
<dbReference type="SUPFAM" id="SSF48239">
    <property type="entry name" value="Terpenoid cyclases/Protein prenyltransferases"/>
    <property type="match status" value="1"/>
</dbReference>
<dbReference type="SUPFAM" id="SSF48576">
    <property type="entry name" value="Terpenoid synthases"/>
    <property type="match status" value="1"/>
</dbReference>
<evidence type="ECO:0000250" key="1">
    <source>
        <dbReference type="UniProtKB" id="A0A1C9J6A7"/>
    </source>
</evidence>
<evidence type="ECO:0000250" key="2">
    <source>
        <dbReference type="UniProtKB" id="Q40577"/>
    </source>
</evidence>
<evidence type="ECO:0000250" key="3">
    <source>
        <dbReference type="UniProtKB" id="R9QMW4"/>
    </source>
</evidence>
<evidence type="ECO:0000255" key="4"/>
<evidence type="ECO:0000269" key="5">
    <source>
    </source>
</evidence>
<evidence type="ECO:0000303" key="6">
    <source>
    </source>
</evidence>
<evidence type="ECO:0000305" key="7"/>
<feature type="transit peptide" description="Chloroplast" evidence="4">
    <location>
        <begin position="1"/>
        <end status="unknown"/>
    </location>
</feature>
<feature type="chain" id="PRO_0000455029" description="Monoterpene synthase like 2, chloroplastic">
    <location>
        <begin status="unknown"/>
        <end position="628"/>
    </location>
</feature>
<feature type="short sequence motif" description="DDXXD motif" evidence="7">
    <location>
        <begin position="379"/>
        <end position="383"/>
    </location>
</feature>
<feature type="binding site" evidence="2">
    <location>
        <position position="379"/>
    </location>
    <ligand>
        <name>Mg(2+)</name>
        <dbReference type="ChEBI" id="CHEBI:18420"/>
        <label>1</label>
    </ligand>
</feature>
<feature type="binding site" evidence="2">
    <location>
        <position position="379"/>
    </location>
    <ligand>
        <name>Mg(2+)</name>
        <dbReference type="ChEBI" id="CHEBI:18420"/>
        <label>2</label>
    </ligand>
</feature>
<feature type="binding site" evidence="2">
    <location>
        <position position="383"/>
    </location>
    <ligand>
        <name>Mg(2+)</name>
        <dbReference type="ChEBI" id="CHEBI:18420"/>
        <label>1</label>
    </ligand>
</feature>
<feature type="binding site" evidence="2">
    <location>
        <position position="383"/>
    </location>
    <ligand>
        <name>Mg(2+)</name>
        <dbReference type="ChEBI" id="CHEBI:18420"/>
        <label>2</label>
    </ligand>
</feature>
<feature type="binding site" evidence="2">
    <location>
        <position position="531"/>
    </location>
    <ligand>
        <name>Mg(2+)</name>
        <dbReference type="ChEBI" id="CHEBI:18420"/>
        <label>3</label>
    </ligand>
</feature>
<accession>R9QMW6</accession>
<reference key="1">
    <citation type="journal article" date="2013" name="BMC Plant Biol.">
        <title>Transcriptome resources and functional characterization of monoterpene synthases for two host species of the mountain pine beetle, lodgepole pine (Pinus contorta) and jack pine (Pinus banksiana).</title>
        <authorList>
            <person name="Hall D.E."/>
            <person name="Yuen M.M.S."/>
            <person name="Jancsik S."/>
            <person name="Quesada A.L."/>
            <person name="Dullat H.K."/>
            <person name="Li M."/>
            <person name="Henderson H."/>
            <person name="Arango-Velez A."/>
            <person name="Liao N.Y."/>
            <person name="Docking R.T."/>
            <person name="Chan S.K."/>
            <person name="Cooke J.E.K."/>
            <person name="Breuil C."/>
            <person name="Jones S.J.M."/>
            <person name="Keeling C.I."/>
            <person name="Bohlmann J."/>
        </authorList>
    </citation>
    <scope>NUCLEOTIDE SEQUENCE [MRNA]</scope>
    <scope>FUNCTION</scope>
    <scope>CATALYTIC ACTIVITY</scope>
    <scope>PATHWAY</scope>
</reference>
<comment type="function">
    <text evidence="3">Monoterpene synthase (TPS) involved in the biosynthesis of monoterpene natural products included in conifer oleoresin secretions and volatile emissions; these compounds contribute to biotic and abiotic stress defense against herbivores and pathogens.</text>
</comment>
<comment type="cofactor">
    <cofactor evidence="1">
        <name>Mg(2+)</name>
        <dbReference type="ChEBI" id="CHEBI:18420"/>
    </cofactor>
    <cofactor evidence="1">
        <name>Mn(2+)</name>
        <dbReference type="ChEBI" id="CHEBI:29035"/>
    </cofactor>
    <text evidence="1">Binds 3 Mg(2+) or Mn(2+) ions per subunit.</text>
</comment>
<comment type="pathway">
    <text evidence="5">Terpene metabolism; oleoresin biosynthesis.</text>
</comment>
<comment type="pathway">
    <text evidence="5">Secondary metabolite biosynthesis; terpenoid biosynthesis.</text>
</comment>
<comment type="subcellular location">
    <subcellularLocation>
        <location evidence="4">Plastid</location>
        <location evidence="4">Chloroplast</location>
    </subcellularLocation>
</comment>
<comment type="domain">
    <text evidence="7">The Asp-Asp-Xaa-Xaa-Asp/Glu (DDXXD/E) motif is important for the catalytic activity, presumably through binding to Mg(2+).</text>
</comment>
<comment type="similarity">
    <text evidence="7">Belongs to the terpene synthase family. Tpsd subfamily.</text>
</comment>
<protein>
    <recommendedName>
        <fullName evidence="6">Monoterpene synthase like 2, chloroplastic</fullName>
        <shortName evidence="6">PbTPS-mono2</shortName>
        <ecNumber evidence="3">4.2.3.-</ecNumber>
    </recommendedName>
</protein>